<name>YGFZ_SHIB3</name>
<keyword id="KW-0963">Cytoplasm</keyword>
<keyword id="KW-0290">Folate-binding</keyword>
<keyword id="KW-1185">Reference proteome</keyword>
<keyword id="KW-0819">tRNA processing</keyword>
<evidence type="ECO:0000255" key="1">
    <source>
        <dbReference type="HAMAP-Rule" id="MF_01175"/>
    </source>
</evidence>
<proteinExistence type="inferred from homology"/>
<comment type="function">
    <text evidence="1">Folate-binding protein involved in regulating the level of ATP-DnaA and in the modification of some tRNAs. It is probably a key factor in regulatory networks that act via tRNA modification, such as initiation of chromosomal replication.</text>
</comment>
<comment type="subcellular location">
    <subcellularLocation>
        <location evidence="1">Cytoplasm</location>
    </subcellularLocation>
</comment>
<comment type="similarity">
    <text evidence="1">Belongs to the tRNA-modifying YgfZ family.</text>
</comment>
<sequence>MAFTPFPPRQPTASARLPLTLMTLDDWALATITGADSEKYMQGQVTADVSQMTENQHLLAAHCDAKGKMWSNLRLFRDGDGFAWIERRSVREPQLTELKKYAVFSKVTIAPDDERVLLGVAGFQARAALANLFSELPSREKQVVKEGATTLLWFEHPAERFLIVTDEATANMLTDKLRGEAELNNSQQWLALNIEAGFPVIDAANSGQFIPQATNLQALGGISFKKGCYTGQEMVARAKFRGANKRALWLLAGSASRLPEAGEDLELKMGENWRRTGTVLAAVKLEDGQVVVQVVMNNDMEPDSIFRVRDDANTLHIEPLPYSLEE</sequence>
<organism>
    <name type="scientific">Shigella boydii serotype 18 (strain CDC 3083-94 / BS512)</name>
    <dbReference type="NCBI Taxonomy" id="344609"/>
    <lineage>
        <taxon>Bacteria</taxon>
        <taxon>Pseudomonadati</taxon>
        <taxon>Pseudomonadota</taxon>
        <taxon>Gammaproteobacteria</taxon>
        <taxon>Enterobacterales</taxon>
        <taxon>Enterobacteriaceae</taxon>
        <taxon>Shigella</taxon>
    </lineage>
</organism>
<reference key="1">
    <citation type="submission" date="2008-05" db="EMBL/GenBank/DDBJ databases">
        <title>Complete sequence of Shigella boydii serotype 18 strain BS512.</title>
        <authorList>
            <person name="Rasko D.A."/>
            <person name="Rosovitz M."/>
            <person name="Maurelli A.T."/>
            <person name="Myers G."/>
            <person name="Seshadri R."/>
            <person name="Cer R."/>
            <person name="Jiang L."/>
            <person name="Ravel J."/>
            <person name="Sebastian Y."/>
        </authorList>
    </citation>
    <scope>NUCLEOTIDE SEQUENCE [LARGE SCALE GENOMIC DNA]</scope>
    <source>
        <strain>CDC 3083-94 / BS512</strain>
    </source>
</reference>
<feature type="chain" id="PRO_1000138087" description="tRNA-modifying protein YgfZ">
    <location>
        <begin position="1"/>
        <end position="326"/>
    </location>
</feature>
<feature type="binding site" evidence="1">
    <location>
        <position position="27"/>
    </location>
    <ligand>
        <name>folate</name>
        <dbReference type="ChEBI" id="CHEBI:62501"/>
    </ligand>
</feature>
<feature type="binding site" evidence="1">
    <location>
        <position position="189"/>
    </location>
    <ligand>
        <name>folate</name>
        <dbReference type="ChEBI" id="CHEBI:62501"/>
    </ligand>
</feature>
<accession>B2U0R5</accession>
<gene>
    <name evidence="1" type="primary">ygfZ</name>
    <name type="ordered locus">SbBS512_E3319</name>
</gene>
<protein>
    <recommendedName>
        <fullName evidence="1">tRNA-modifying protein YgfZ</fullName>
    </recommendedName>
</protein>
<dbReference type="EMBL" id="CP001063">
    <property type="protein sequence ID" value="ACD08241.1"/>
    <property type="molecule type" value="Genomic_DNA"/>
</dbReference>
<dbReference type="RefSeq" id="WP_000886098.1">
    <property type="nucleotide sequence ID" value="NC_010658.1"/>
</dbReference>
<dbReference type="SMR" id="B2U0R5"/>
<dbReference type="STRING" id="344609.SbBS512_E3319"/>
<dbReference type="KEGG" id="sbc:SbBS512_E3319"/>
<dbReference type="HOGENOM" id="CLU_007884_6_1_6"/>
<dbReference type="Proteomes" id="UP000001030">
    <property type="component" value="Chromosome"/>
</dbReference>
<dbReference type="GO" id="GO:0005737">
    <property type="term" value="C:cytoplasm"/>
    <property type="evidence" value="ECO:0007669"/>
    <property type="project" value="UniProtKB-SubCell"/>
</dbReference>
<dbReference type="GO" id="GO:0005542">
    <property type="term" value="F:folic acid binding"/>
    <property type="evidence" value="ECO:0007669"/>
    <property type="project" value="UniProtKB-UniRule"/>
</dbReference>
<dbReference type="GO" id="GO:0016226">
    <property type="term" value="P:iron-sulfur cluster assembly"/>
    <property type="evidence" value="ECO:0007669"/>
    <property type="project" value="TreeGrafter"/>
</dbReference>
<dbReference type="GO" id="GO:0009451">
    <property type="term" value="P:RNA modification"/>
    <property type="evidence" value="ECO:0007669"/>
    <property type="project" value="InterPro"/>
</dbReference>
<dbReference type="GO" id="GO:0008033">
    <property type="term" value="P:tRNA processing"/>
    <property type="evidence" value="ECO:0007669"/>
    <property type="project" value="UniProtKB-UniRule"/>
</dbReference>
<dbReference type="FunFam" id="2.40.30.160:FF:000001">
    <property type="entry name" value="tRNA-modifying protein YgfZ"/>
    <property type="match status" value="1"/>
</dbReference>
<dbReference type="FunFam" id="3.30.70.1400:FF:000002">
    <property type="entry name" value="tRNA-modifying protein YgfZ"/>
    <property type="match status" value="1"/>
</dbReference>
<dbReference type="FunFam" id="3.30.70.1630:FF:000001">
    <property type="entry name" value="tRNA-modifying protein YgfZ"/>
    <property type="match status" value="1"/>
</dbReference>
<dbReference type="Gene3D" id="2.40.30.160">
    <property type="match status" value="1"/>
</dbReference>
<dbReference type="Gene3D" id="3.30.70.1630">
    <property type="match status" value="1"/>
</dbReference>
<dbReference type="Gene3D" id="3.30.70.1400">
    <property type="entry name" value="Aminomethyltransferase beta-barrel domains"/>
    <property type="match status" value="1"/>
</dbReference>
<dbReference type="HAMAP" id="MF_01175">
    <property type="entry name" value="tRNA_modifying_YgfZ"/>
    <property type="match status" value="1"/>
</dbReference>
<dbReference type="InterPro" id="IPR006222">
    <property type="entry name" value="GCV_T_N"/>
</dbReference>
<dbReference type="InterPro" id="IPR029043">
    <property type="entry name" value="GcvT/YgfZ_C"/>
</dbReference>
<dbReference type="InterPro" id="IPR023758">
    <property type="entry name" value="tRNA-modifying_YgfZ"/>
</dbReference>
<dbReference type="InterPro" id="IPR045179">
    <property type="entry name" value="YgfZ/GcvT"/>
</dbReference>
<dbReference type="InterPro" id="IPR017703">
    <property type="entry name" value="YgfZ/GcvT_CS"/>
</dbReference>
<dbReference type="InterPro" id="IPR048451">
    <property type="entry name" value="YgfZ_barrel"/>
</dbReference>
<dbReference type="NCBIfam" id="NF007110">
    <property type="entry name" value="PRK09559.1"/>
    <property type="match status" value="1"/>
</dbReference>
<dbReference type="NCBIfam" id="TIGR03317">
    <property type="entry name" value="ygfZ_signature"/>
    <property type="match status" value="1"/>
</dbReference>
<dbReference type="PANTHER" id="PTHR22602">
    <property type="entry name" value="TRANSFERASE CAF17, MITOCHONDRIAL-RELATED"/>
    <property type="match status" value="1"/>
</dbReference>
<dbReference type="PANTHER" id="PTHR22602:SF0">
    <property type="entry name" value="TRANSFERASE CAF17, MITOCHONDRIAL-RELATED"/>
    <property type="match status" value="1"/>
</dbReference>
<dbReference type="Pfam" id="PF01571">
    <property type="entry name" value="GCV_T"/>
    <property type="match status" value="1"/>
</dbReference>
<dbReference type="Pfam" id="PF21130">
    <property type="entry name" value="YgfZ_barrel"/>
    <property type="match status" value="1"/>
</dbReference>
<dbReference type="SUPFAM" id="SSF101790">
    <property type="entry name" value="Aminomethyltransferase beta-barrel domain"/>
    <property type="match status" value="1"/>
</dbReference>
<dbReference type="SUPFAM" id="SSF103025">
    <property type="entry name" value="Folate-binding domain"/>
    <property type="match status" value="1"/>
</dbReference>